<comment type="function">
    <text evidence="1 6">RNA chaperone with significant RNA binding, RNA strand exchange and RNA duplexing activities. May regulate ProP activity through an RNA-based, post-transcriptional mechanism.</text>
</comment>
<comment type="interaction">
    <interactant intactId="EBI-8767901">
        <id>P45577</id>
    </interactant>
    <interactant intactId="EBI-548694">
        <id>P0ACZ4</id>
        <label>evgA</label>
    </interactant>
    <organismsDiffer>false</organismsDiffer>
    <experiments>3</experiments>
</comment>
<comment type="subcellular location">
    <subcellularLocation>
        <location evidence="1 3 4">Cytoplasm</location>
    </subcellularLocation>
</comment>
<comment type="domain">
    <text evidence="4 5 6">Contains an alpha-helical N-terminal domain (FinO-like) and a beta-sheet C-terminal domain (Hfq-like), connected by an unstructured linker. The FinO-like domain serves as a high-affinity RNA-binding domain, whereas the Hfq-like domain is largely responsible for RNA strand exchange and duplexing.</text>
</comment>
<comment type="disruption phenotype">
    <text evidence="3">Mutation reduces both the rate and the extent of ProP activation by an osmotic upshift, but does not impair transcription or translation of proP.</text>
</comment>
<comment type="similarity">
    <text evidence="1">Belongs to the ProQ family.</text>
</comment>
<comment type="sequence caution" evidence="7">
    <conflict type="erroneous initiation">
        <sequence resource="EMBL-CDS" id="BAA20566"/>
    </conflict>
    <text>Truncated N-terminus.</text>
</comment>
<comment type="sequence caution" evidence="7">
    <conflict type="frameshift">
        <sequence resource="EMBL-CDS" id="BAA20566"/>
    </conflict>
</comment>
<feature type="chain" id="PRO_0000214614" description="RNA chaperone ProQ">
    <location>
        <begin position="1"/>
        <end position="232"/>
    </location>
</feature>
<feature type="region of interest" description="Disordered" evidence="2">
    <location>
        <begin position="105"/>
        <end position="182"/>
    </location>
</feature>
<feature type="compositionally biased region" description="Basic and acidic residues" evidence="2">
    <location>
        <begin position="117"/>
        <end position="136"/>
    </location>
</feature>
<feature type="compositionally biased region" description="Basic residues" evidence="2">
    <location>
        <begin position="137"/>
        <end position="146"/>
    </location>
</feature>
<feature type="compositionally biased region" description="Basic and acidic residues" evidence="2">
    <location>
        <begin position="147"/>
        <end position="177"/>
    </location>
</feature>
<feature type="helix" evidence="8">
    <location>
        <begin position="11"/>
        <end position="20"/>
    </location>
</feature>
<feature type="turn" evidence="8">
    <location>
        <begin position="22"/>
        <end position="24"/>
    </location>
</feature>
<feature type="strand" evidence="8">
    <location>
        <begin position="27"/>
        <end position="30"/>
    </location>
</feature>
<feature type="helix" evidence="8">
    <location>
        <begin position="39"/>
        <end position="45"/>
    </location>
</feature>
<feature type="helix" evidence="8">
    <location>
        <begin position="47"/>
        <end position="49"/>
    </location>
</feature>
<feature type="helix" evidence="8">
    <location>
        <begin position="55"/>
        <end position="58"/>
    </location>
</feature>
<feature type="helix" evidence="8">
    <location>
        <begin position="60"/>
        <end position="63"/>
    </location>
</feature>
<feature type="helix" evidence="8">
    <location>
        <begin position="64"/>
        <end position="66"/>
    </location>
</feature>
<feature type="turn" evidence="8">
    <location>
        <begin position="68"/>
        <end position="73"/>
    </location>
</feature>
<feature type="helix" evidence="8">
    <location>
        <begin position="77"/>
        <end position="79"/>
    </location>
</feature>
<feature type="strand" evidence="8">
    <location>
        <begin position="85"/>
        <end position="87"/>
    </location>
</feature>
<feature type="turn" evidence="8">
    <location>
        <begin position="88"/>
        <end position="90"/>
    </location>
</feature>
<feature type="strand" evidence="8">
    <location>
        <begin position="93"/>
        <end position="95"/>
    </location>
</feature>
<feature type="turn" evidence="8">
    <location>
        <begin position="96"/>
        <end position="102"/>
    </location>
</feature>
<feature type="helix" evidence="8">
    <location>
        <begin position="103"/>
        <end position="110"/>
    </location>
</feature>
<feature type="strand" evidence="8">
    <location>
        <begin position="112"/>
        <end position="114"/>
    </location>
</feature>
<feature type="strand" evidence="9">
    <location>
        <begin position="183"/>
        <end position="186"/>
    </location>
</feature>
<feature type="strand" evidence="9">
    <location>
        <begin position="196"/>
        <end position="199"/>
    </location>
</feature>
<feature type="strand" evidence="9">
    <location>
        <begin position="203"/>
        <end position="208"/>
    </location>
</feature>
<feature type="strand" evidence="9">
    <location>
        <begin position="210"/>
        <end position="217"/>
    </location>
</feature>
<feature type="turn" evidence="9">
    <location>
        <begin position="227"/>
        <end position="229"/>
    </location>
</feature>
<evidence type="ECO:0000255" key="1">
    <source>
        <dbReference type="HAMAP-Rule" id="MF_00749"/>
    </source>
</evidence>
<evidence type="ECO:0000256" key="2">
    <source>
        <dbReference type="SAM" id="MobiDB-lite"/>
    </source>
</evidence>
<evidence type="ECO:0000269" key="3">
    <source>
    </source>
</evidence>
<evidence type="ECO:0000269" key="4">
    <source>
    </source>
</evidence>
<evidence type="ECO:0000269" key="5">
    <source>
    </source>
</evidence>
<evidence type="ECO:0000269" key="6">
    <source>
    </source>
</evidence>
<evidence type="ECO:0000305" key="7"/>
<evidence type="ECO:0007829" key="8">
    <source>
        <dbReference type="PDB" id="5NB9"/>
    </source>
</evidence>
<evidence type="ECO:0007829" key="9">
    <source>
        <dbReference type="PDB" id="5NBB"/>
    </source>
</evidence>
<keyword id="KW-0002">3D-structure</keyword>
<keyword id="KW-0143">Chaperone</keyword>
<keyword id="KW-0963">Cytoplasm</keyword>
<keyword id="KW-0903">Direct protein sequencing</keyword>
<keyword id="KW-1185">Reference proteome</keyword>
<keyword id="KW-0694">RNA-binding</keyword>
<accession>P45577</accession>
<accession>P56606</accession>
<organism>
    <name type="scientific">Escherichia coli (strain K12)</name>
    <dbReference type="NCBI Taxonomy" id="83333"/>
    <lineage>
        <taxon>Bacteria</taxon>
        <taxon>Pseudomonadati</taxon>
        <taxon>Pseudomonadota</taxon>
        <taxon>Gammaproteobacteria</taxon>
        <taxon>Enterobacterales</taxon>
        <taxon>Enterobacteriaceae</taxon>
        <taxon>Escherichia</taxon>
    </lineage>
</organism>
<dbReference type="EMBL" id="L48409">
    <property type="protein sequence ID" value="AAD41527.1"/>
    <property type="molecule type" value="Genomic_DNA"/>
</dbReference>
<dbReference type="EMBL" id="U00096">
    <property type="protein sequence ID" value="AAC74901.2"/>
    <property type="molecule type" value="Genomic_DNA"/>
</dbReference>
<dbReference type="EMBL" id="AP009048">
    <property type="protein sequence ID" value="BAA15639.2"/>
    <property type="molecule type" value="Genomic_DNA"/>
</dbReference>
<dbReference type="EMBL" id="D00674">
    <property type="protein sequence ID" value="BAA20566.1"/>
    <property type="status" value="ALT_SEQ"/>
    <property type="molecule type" value="Genomic_DNA"/>
</dbReference>
<dbReference type="PIR" id="G64944">
    <property type="entry name" value="G64944"/>
</dbReference>
<dbReference type="RefSeq" id="WP_000431381.1">
    <property type="nucleotide sequence ID" value="NZ_SSZK01000001.1"/>
</dbReference>
<dbReference type="RefSeq" id="YP_026161.1">
    <property type="nucleotide sequence ID" value="NC_000913.3"/>
</dbReference>
<dbReference type="PDB" id="5NB9">
    <property type="method" value="NMR"/>
    <property type="chains" value="A=1-119"/>
</dbReference>
<dbReference type="PDB" id="5NBB">
    <property type="method" value="NMR"/>
    <property type="chains" value="A=180-232"/>
</dbReference>
<dbReference type="PDBsum" id="5NB9"/>
<dbReference type="PDBsum" id="5NBB"/>
<dbReference type="SMR" id="P45577"/>
<dbReference type="BioGRID" id="4260696">
    <property type="interactions" value="30"/>
</dbReference>
<dbReference type="BioGRID" id="853211">
    <property type="interactions" value="40"/>
</dbReference>
<dbReference type="DIP" id="DIP-10572N"/>
<dbReference type="FunCoup" id="P45577">
    <property type="interactions" value="66"/>
</dbReference>
<dbReference type="IntAct" id="P45577">
    <property type="interactions" value="43"/>
</dbReference>
<dbReference type="STRING" id="511145.b1831"/>
<dbReference type="jPOST" id="P45577"/>
<dbReference type="PaxDb" id="511145-b1831"/>
<dbReference type="EnsemblBacteria" id="AAC74901">
    <property type="protein sequence ID" value="AAC74901"/>
    <property type="gene ID" value="b1831"/>
</dbReference>
<dbReference type="GeneID" id="948950"/>
<dbReference type="KEGG" id="ecj:JW5300"/>
<dbReference type="KEGG" id="eco:b1831"/>
<dbReference type="KEGG" id="ecoc:C3026_10435"/>
<dbReference type="PATRIC" id="fig|1411691.4.peg.419"/>
<dbReference type="EchoBASE" id="EB2707"/>
<dbReference type="eggNOG" id="COG3109">
    <property type="taxonomic scope" value="Bacteria"/>
</dbReference>
<dbReference type="HOGENOM" id="CLU_113254_0_0_6"/>
<dbReference type="InParanoid" id="P45577"/>
<dbReference type="OMA" id="WRYLKGV"/>
<dbReference type="OrthoDB" id="8421419at2"/>
<dbReference type="PhylomeDB" id="P45577"/>
<dbReference type="BioCyc" id="EcoCyc:EG12866-MONOMER"/>
<dbReference type="PRO" id="PR:P45577"/>
<dbReference type="Proteomes" id="UP000000625">
    <property type="component" value="Chromosome"/>
</dbReference>
<dbReference type="GO" id="GO:0005829">
    <property type="term" value="C:cytosol"/>
    <property type="evidence" value="ECO:0000314"/>
    <property type="project" value="EcoCyc"/>
</dbReference>
<dbReference type="GO" id="GO:0003730">
    <property type="term" value="F:mRNA 3'-UTR binding"/>
    <property type="evidence" value="ECO:0000314"/>
    <property type="project" value="EcoCyc"/>
</dbReference>
<dbReference type="GO" id="GO:0003729">
    <property type="term" value="F:mRNA binding"/>
    <property type="evidence" value="ECO:0000314"/>
    <property type="project" value="EcoCyc"/>
</dbReference>
<dbReference type="GO" id="GO:0033592">
    <property type="term" value="F:RNA strand annealing activity"/>
    <property type="evidence" value="ECO:0000314"/>
    <property type="project" value="EcoCyc"/>
</dbReference>
<dbReference type="GO" id="GO:0034057">
    <property type="term" value="F:RNA strand-exchange activity"/>
    <property type="evidence" value="ECO:0000314"/>
    <property type="project" value="EcoCyc"/>
</dbReference>
<dbReference type="GO" id="GO:0071475">
    <property type="term" value="P:cellular hyperosmotic salinity response"/>
    <property type="evidence" value="ECO:0000315"/>
    <property type="project" value="CAFA"/>
</dbReference>
<dbReference type="GO" id="GO:0006974">
    <property type="term" value="P:DNA damage response"/>
    <property type="evidence" value="ECO:0000315"/>
    <property type="project" value="EcoCyc"/>
</dbReference>
<dbReference type="GO" id="GO:0007231">
    <property type="term" value="P:osmosensory signaling pathway"/>
    <property type="evidence" value="ECO:0000315"/>
    <property type="project" value="CAFA"/>
</dbReference>
<dbReference type="GO" id="GO:1902836">
    <property type="term" value="P:positive regulation of proline import across plasma membrane"/>
    <property type="evidence" value="ECO:0000315"/>
    <property type="project" value="CAFA"/>
</dbReference>
<dbReference type="GO" id="GO:0051050">
    <property type="term" value="P:positive regulation of transport"/>
    <property type="evidence" value="ECO:0000269"/>
    <property type="project" value="EcoCyc"/>
</dbReference>
<dbReference type="GO" id="GO:0010608">
    <property type="term" value="P:post-transcriptional regulation of gene expression"/>
    <property type="evidence" value="ECO:0000314"/>
    <property type="project" value="EcoCyc"/>
</dbReference>
<dbReference type="GO" id="GO:0044010">
    <property type="term" value="P:single-species biofilm formation"/>
    <property type="evidence" value="ECO:0000315"/>
    <property type="project" value="EcoCyc"/>
</dbReference>
<dbReference type="DisProt" id="DP00377"/>
<dbReference type="FunFam" id="1.10.1710.10:FF:000001">
    <property type="entry name" value="RNA chaperone ProQ"/>
    <property type="match status" value="1"/>
</dbReference>
<dbReference type="Gene3D" id="1.10.1710.10">
    <property type="entry name" value="ProQ/FinO domain"/>
    <property type="match status" value="1"/>
</dbReference>
<dbReference type="HAMAP" id="MF_00749">
    <property type="entry name" value="ProQ"/>
    <property type="match status" value="1"/>
</dbReference>
<dbReference type="InterPro" id="IPR023529">
    <property type="entry name" value="ProQ"/>
</dbReference>
<dbReference type="InterPro" id="IPR016103">
    <property type="entry name" value="ProQ/FinO"/>
</dbReference>
<dbReference type="InterPro" id="IPR036442">
    <property type="entry name" value="ProQ/FinO_sf"/>
</dbReference>
<dbReference type="InterPro" id="IPR035236">
    <property type="entry name" value="ProQ_C"/>
</dbReference>
<dbReference type="NCBIfam" id="NF003434">
    <property type="entry name" value="PRK04950.1"/>
    <property type="match status" value="1"/>
</dbReference>
<dbReference type="PANTHER" id="PTHR38106">
    <property type="entry name" value="RNA CHAPERONE PROQ"/>
    <property type="match status" value="1"/>
</dbReference>
<dbReference type="PANTHER" id="PTHR38106:SF1">
    <property type="entry name" value="RNA CHAPERONE PROQ"/>
    <property type="match status" value="1"/>
</dbReference>
<dbReference type="Pfam" id="PF04352">
    <property type="entry name" value="ProQ"/>
    <property type="match status" value="1"/>
</dbReference>
<dbReference type="Pfam" id="PF17516">
    <property type="entry name" value="ProQ_C"/>
    <property type="match status" value="1"/>
</dbReference>
<dbReference type="SMART" id="SM00945">
    <property type="entry name" value="ProQ"/>
    <property type="match status" value="1"/>
</dbReference>
<dbReference type="SUPFAM" id="SSF48657">
    <property type="entry name" value="FinO-like"/>
    <property type="match status" value="1"/>
</dbReference>
<reference key="1">
    <citation type="journal article" date="1999" name="J. Bacteriol.">
        <title>Protein ProQ influences osmotic activation of compatible solute transporter ProP in Escherichia coli K-12.</title>
        <authorList>
            <person name="Kunte H.J."/>
            <person name="Crane R.A."/>
            <person name="Culham D.E."/>
            <person name="Richmond D."/>
            <person name="Wood J.M."/>
        </authorList>
    </citation>
    <scope>NUCLEOTIDE SEQUENCE [GENOMIC DNA]</scope>
    <scope>SUBCELLULAR LOCATION</scope>
    <scope>DISRUPTION PHENOTYPE</scope>
    <source>
        <strain>K12</strain>
    </source>
</reference>
<reference key="2">
    <citation type="journal article" date="1996" name="DNA Res.">
        <title>A 460-kb DNA sequence of the Escherichia coli K-12 genome corresponding to the 40.1-50.0 min region on the linkage map.</title>
        <authorList>
            <person name="Itoh T."/>
            <person name="Aiba H."/>
            <person name="Baba T."/>
            <person name="Fujita K."/>
            <person name="Hayashi K."/>
            <person name="Inada T."/>
            <person name="Isono K."/>
            <person name="Kasai H."/>
            <person name="Kimura S."/>
            <person name="Kitakawa M."/>
            <person name="Kitagawa M."/>
            <person name="Makino K."/>
            <person name="Miki T."/>
            <person name="Mizobuchi K."/>
            <person name="Mori H."/>
            <person name="Mori T."/>
            <person name="Motomura K."/>
            <person name="Nakade S."/>
            <person name="Nakamura Y."/>
            <person name="Nashimoto H."/>
            <person name="Nishio Y."/>
            <person name="Oshima T."/>
            <person name="Saito N."/>
            <person name="Sampei G."/>
            <person name="Seki Y."/>
            <person name="Sivasundaram S."/>
            <person name="Tagami H."/>
            <person name="Takeda J."/>
            <person name="Takemoto K."/>
            <person name="Wada C."/>
            <person name="Yamamoto Y."/>
            <person name="Horiuchi T."/>
        </authorList>
    </citation>
    <scope>NUCLEOTIDE SEQUENCE [LARGE SCALE GENOMIC DNA]</scope>
    <source>
        <strain>K12 / W3110 / ATCC 27325 / DSM 5911</strain>
    </source>
</reference>
<reference key="3">
    <citation type="journal article" date="1997" name="Science">
        <title>The complete genome sequence of Escherichia coli K-12.</title>
        <authorList>
            <person name="Blattner F.R."/>
            <person name="Plunkett G. III"/>
            <person name="Bloch C.A."/>
            <person name="Perna N.T."/>
            <person name="Burland V."/>
            <person name="Riley M."/>
            <person name="Collado-Vides J."/>
            <person name="Glasner J.D."/>
            <person name="Rode C.K."/>
            <person name="Mayhew G.F."/>
            <person name="Gregor J."/>
            <person name="Davis N.W."/>
            <person name="Kirkpatrick H.A."/>
            <person name="Goeden M.A."/>
            <person name="Rose D.J."/>
            <person name="Mau B."/>
            <person name="Shao Y."/>
        </authorList>
    </citation>
    <scope>NUCLEOTIDE SEQUENCE [LARGE SCALE GENOMIC DNA]</scope>
    <source>
        <strain>K12 / MG1655 / ATCC 47076</strain>
    </source>
</reference>
<reference key="4">
    <citation type="journal article" date="2006" name="Mol. Syst. Biol.">
        <title>Highly accurate genome sequences of Escherichia coli K-12 strains MG1655 and W3110.</title>
        <authorList>
            <person name="Hayashi K."/>
            <person name="Morooka N."/>
            <person name="Yamamoto Y."/>
            <person name="Fujita K."/>
            <person name="Isono K."/>
            <person name="Choi S."/>
            <person name="Ohtsubo E."/>
            <person name="Baba T."/>
            <person name="Wanner B.L."/>
            <person name="Mori H."/>
            <person name="Horiuchi T."/>
        </authorList>
    </citation>
    <scope>NUCLEOTIDE SEQUENCE [LARGE SCALE GENOMIC DNA]</scope>
    <source>
        <strain>K12 / W3110 / ATCC 27325 / DSM 5911</strain>
    </source>
</reference>
<reference key="5">
    <citation type="journal article" date="1991" name="J. Bacteriol.">
        <title>Cloning, mapping, and characterization of the Escherichia coli prc gene, which is involved in C-terminal processing of penicillin-binding protein 3.</title>
        <authorList>
            <person name="Hara H."/>
            <person name="Yamamoto Y."/>
            <person name="Higashitani A."/>
            <person name="Suzuki H."/>
            <person name="Nishimura Y."/>
        </authorList>
    </citation>
    <scope>NUCLEOTIDE SEQUENCE [GENOMIC DNA] OF 146-232</scope>
    <source>
        <strain>K12 / W3110 / ATCC 27325 / DSM 5911</strain>
    </source>
</reference>
<reference key="6">
    <citation type="journal article" date="2004" name="Biochemistry">
        <title>Overexpression, purification, and characterization of ProQ, a posttranslational regulator for osmoregulatory transporter ProP of Escherichia coli.</title>
        <authorList>
            <person name="Smith M.N."/>
            <person name="Crane R.A."/>
            <person name="Keates R.A."/>
            <person name="Wood J.M."/>
        </authorList>
    </citation>
    <scope>PROTEIN SEQUENCE OF 1-6</scope>
    <scope>SUBCELLULAR LOCATION</scope>
    <scope>DOMAIN</scope>
</reference>
<reference key="7">
    <citation type="journal article" date="1995" name="Nucleic Acids Res.">
        <title>Detection of new genes in a bacterial genome using Markov models for three gene classes.</title>
        <authorList>
            <person name="Borodovsky M."/>
            <person name="McIninch J."/>
            <person name="Koonin E.V."/>
            <person name="Rudd K.E."/>
            <person name="Medigue C."/>
            <person name="Danchin A."/>
        </authorList>
    </citation>
    <scope>IDENTIFICATION</scope>
</reference>
<reference key="8">
    <citation type="journal article" date="2007" name="Biochemistry">
        <title>Structural and functional analysis of ProQ: an osmoregulatory protein of Escherichia coli.</title>
        <authorList>
            <person name="Smith M.N."/>
            <person name="Kwok S.C."/>
            <person name="Hodges R.S."/>
            <person name="Wood J.M."/>
        </authorList>
    </citation>
    <scope>IDENTIFICATION BY MASS SPECTROMETRY</scope>
    <scope>DOMAIN</scope>
</reference>
<reference key="9">
    <citation type="journal article" date="2011" name="Biochemistry">
        <title>ProQ is an RNA chaperone that controls ProP levels in Escherichia coli.</title>
        <authorList>
            <person name="Chaulk S.G."/>
            <person name="Smith Frieday M.N."/>
            <person name="Arthur D.C."/>
            <person name="Culham D.E."/>
            <person name="Edwards R.A."/>
            <person name="Soo P."/>
            <person name="Frost L.S."/>
            <person name="Keates R.A."/>
            <person name="Glover J.N."/>
            <person name="Wood J.M."/>
        </authorList>
    </citation>
    <scope>FUNCTION</scope>
    <scope>RNA-BINDING</scope>
    <scope>DOMAIN</scope>
</reference>
<protein>
    <recommendedName>
        <fullName evidence="1">RNA chaperone ProQ</fullName>
    </recommendedName>
</protein>
<gene>
    <name evidence="1" type="primary">proQ</name>
    <name type="synonym">yebJ</name>
    <name type="synonym">yobE</name>
    <name type="synonym">yoeC</name>
    <name type="ordered locus">b1831</name>
    <name type="ordered locus">JW5300</name>
</gene>
<sequence>MENQPKLNSSKEVIAFLAERFPHCFSAEGEARPLKIGIFQDLVDRVAGEMNLSKTQLRSALRLYTSSWRYLYGVKPGATRVDLDGNPCGELDEQHVEHARKQLEEAKARVQAQRAEQQAKKREAAATAGEKEDAPRRERKPRPTTPRRKEGAERKPRAQKPVEKAPKTVKAPREEQHTPVSDISALTVGQALKVKAGQNAMDATVLEITKDGVRVQLNSGMSLIVRAEHLVF</sequence>
<proteinExistence type="evidence at protein level"/>
<name>PROQ_ECOLI</name>